<accession>B0R4Y6</accession>
<feature type="chain" id="PRO_1000100988" description="DNA-directed RNA polymerase subunit Rpo10">
    <location>
        <begin position="1"/>
        <end position="66"/>
    </location>
</feature>
<feature type="binding site" evidence="1">
    <location>
        <position position="7"/>
    </location>
    <ligand>
        <name>Zn(2+)</name>
        <dbReference type="ChEBI" id="CHEBI:29105"/>
    </ligand>
</feature>
<feature type="binding site" evidence="1">
    <location>
        <position position="10"/>
    </location>
    <ligand>
        <name>Zn(2+)</name>
        <dbReference type="ChEBI" id="CHEBI:29105"/>
    </ligand>
</feature>
<feature type="binding site" evidence="1">
    <location>
        <position position="47"/>
    </location>
    <ligand>
        <name>Zn(2+)</name>
        <dbReference type="ChEBI" id="CHEBI:29105"/>
    </ligand>
</feature>
<feature type="binding site" evidence="1">
    <location>
        <position position="48"/>
    </location>
    <ligand>
        <name>Zn(2+)</name>
        <dbReference type="ChEBI" id="CHEBI:29105"/>
    </ligand>
</feature>
<evidence type="ECO:0000255" key="1">
    <source>
        <dbReference type="HAMAP-Rule" id="MF_00250"/>
    </source>
</evidence>
<name>RPO10_HALS3</name>
<dbReference type="EC" id="2.7.7.6" evidence="1"/>
<dbReference type="EMBL" id="AM774415">
    <property type="protein sequence ID" value="CAP13801.1"/>
    <property type="molecule type" value="Genomic_DNA"/>
</dbReference>
<dbReference type="RefSeq" id="WP_010902819.1">
    <property type="nucleotide sequence ID" value="NC_010364.1"/>
</dbReference>
<dbReference type="SMR" id="B0R4Y6"/>
<dbReference type="EnsemblBacteria" id="CAP13801">
    <property type="protein sequence ID" value="CAP13801"/>
    <property type="gene ID" value="OE_2637F"/>
</dbReference>
<dbReference type="KEGG" id="hsl:OE_2637F"/>
<dbReference type="HOGENOM" id="CLU_143122_1_1_2"/>
<dbReference type="PhylomeDB" id="B0R4Y6"/>
<dbReference type="Proteomes" id="UP000001321">
    <property type="component" value="Chromosome"/>
</dbReference>
<dbReference type="GO" id="GO:0005737">
    <property type="term" value="C:cytoplasm"/>
    <property type="evidence" value="ECO:0007669"/>
    <property type="project" value="UniProtKB-SubCell"/>
</dbReference>
<dbReference type="GO" id="GO:0000428">
    <property type="term" value="C:DNA-directed RNA polymerase complex"/>
    <property type="evidence" value="ECO:0007669"/>
    <property type="project" value="UniProtKB-KW"/>
</dbReference>
<dbReference type="GO" id="GO:0003677">
    <property type="term" value="F:DNA binding"/>
    <property type="evidence" value="ECO:0007669"/>
    <property type="project" value="InterPro"/>
</dbReference>
<dbReference type="GO" id="GO:0003899">
    <property type="term" value="F:DNA-directed RNA polymerase activity"/>
    <property type="evidence" value="ECO:0007669"/>
    <property type="project" value="UniProtKB-UniRule"/>
</dbReference>
<dbReference type="GO" id="GO:0008270">
    <property type="term" value="F:zinc ion binding"/>
    <property type="evidence" value="ECO:0007669"/>
    <property type="project" value="UniProtKB-UniRule"/>
</dbReference>
<dbReference type="GO" id="GO:0006351">
    <property type="term" value="P:DNA-templated transcription"/>
    <property type="evidence" value="ECO:0007669"/>
    <property type="project" value="UniProtKB-UniRule"/>
</dbReference>
<dbReference type="FunFam" id="1.10.10.60:FF:000335">
    <property type="entry name" value="DNA-directed RNA polymerase subunit N, putative"/>
    <property type="match status" value="1"/>
</dbReference>
<dbReference type="Gene3D" id="1.10.10.60">
    <property type="entry name" value="Homeodomain-like"/>
    <property type="match status" value="1"/>
</dbReference>
<dbReference type="HAMAP" id="MF_00250">
    <property type="entry name" value="RNApol_arch_Rpo10"/>
    <property type="match status" value="1"/>
</dbReference>
<dbReference type="InterPro" id="IPR023580">
    <property type="entry name" value="RNA_pol_su_RPB10"/>
</dbReference>
<dbReference type="InterPro" id="IPR020789">
    <property type="entry name" value="RNA_pol_suN_Zn-BS"/>
</dbReference>
<dbReference type="InterPro" id="IPR000268">
    <property type="entry name" value="RPABC5/Rpb10"/>
</dbReference>
<dbReference type="NCBIfam" id="NF003089">
    <property type="entry name" value="PRK04016.1"/>
    <property type="match status" value="1"/>
</dbReference>
<dbReference type="PANTHER" id="PTHR23431:SF3">
    <property type="entry name" value="DNA-DIRECTED RNA POLYMERASES I, II, AND III SUBUNIT RPABC5"/>
    <property type="match status" value="1"/>
</dbReference>
<dbReference type="PANTHER" id="PTHR23431">
    <property type="entry name" value="DNA-DIRECTED RNA POLYMERASES I, II, AND III SUBUNIT RPABC5 FAMILY MEMBER"/>
    <property type="match status" value="1"/>
</dbReference>
<dbReference type="Pfam" id="PF01194">
    <property type="entry name" value="RNA_pol_N"/>
    <property type="match status" value="1"/>
</dbReference>
<dbReference type="PIRSF" id="PIRSF005653">
    <property type="entry name" value="RNA_pol_N/8_sub"/>
    <property type="match status" value="1"/>
</dbReference>
<dbReference type="SUPFAM" id="SSF46924">
    <property type="entry name" value="RNA polymerase subunit RPB10"/>
    <property type="match status" value="1"/>
</dbReference>
<dbReference type="PROSITE" id="PS01112">
    <property type="entry name" value="RNA_POL_N_8KD"/>
    <property type="match status" value="1"/>
</dbReference>
<protein>
    <recommendedName>
        <fullName evidence="1">DNA-directed RNA polymerase subunit Rpo10</fullName>
        <ecNumber evidence="1">2.7.7.6</ecNumber>
    </recommendedName>
    <alternativeName>
        <fullName evidence="1">DNA-directed RNA polymerase subunit N</fullName>
    </alternativeName>
</protein>
<sequence length="66" mass="7443">MMVPVRCFSCGTVVGEHWEAFKARAETHDGDEDPADVLDDLGVDRHCCRRMLIAHQDLVDVVSPYQ</sequence>
<organism>
    <name type="scientific">Halobacterium salinarum (strain ATCC 29341 / DSM 671 / R1)</name>
    <dbReference type="NCBI Taxonomy" id="478009"/>
    <lineage>
        <taxon>Archaea</taxon>
        <taxon>Methanobacteriati</taxon>
        <taxon>Methanobacteriota</taxon>
        <taxon>Stenosarchaea group</taxon>
        <taxon>Halobacteria</taxon>
        <taxon>Halobacteriales</taxon>
        <taxon>Halobacteriaceae</taxon>
        <taxon>Halobacterium</taxon>
        <taxon>Halobacterium salinarum NRC-34001</taxon>
    </lineage>
</organism>
<comment type="function">
    <text evidence="1">DNA-dependent RNA polymerase (RNAP) catalyzes the transcription of DNA into RNA using the four ribonucleoside triphosphates as substrates.</text>
</comment>
<comment type="catalytic activity">
    <reaction evidence="1">
        <text>RNA(n) + a ribonucleoside 5'-triphosphate = RNA(n+1) + diphosphate</text>
        <dbReference type="Rhea" id="RHEA:21248"/>
        <dbReference type="Rhea" id="RHEA-COMP:14527"/>
        <dbReference type="Rhea" id="RHEA-COMP:17342"/>
        <dbReference type="ChEBI" id="CHEBI:33019"/>
        <dbReference type="ChEBI" id="CHEBI:61557"/>
        <dbReference type="ChEBI" id="CHEBI:140395"/>
        <dbReference type="EC" id="2.7.7.6"/>
    </reaction>
</comment>
<comment type="cofactor">
    <cofactor evidence="1">
        <name>Zn(2+)</name>
        <dbReference type="ChEBI" id="CHEBI:29105"/>
    </cofactor>
    <text evidence="1">Binds 1 zinc ion.</text>
</comment>
<comment type="subunit">
    <text evidence="1">Part of the RNA polymerase complex.</text>
</comment>
<comment type="subcellular location">
    <subcellularLocation>
        <location evidence="1">Cytoplasm</location>
    </subcellularLocation>
</comment>
<comment type="similarity">
    <text evidence="1">Belongs to the archaeal Rpo10/eukaryotic RPB10 RNA polymerase subunit family.</text>
</comment>
<proteinExistence type="inferred from homology"/>
<keyword id="KW-0963">Cytoplasm</keyword>
<keyword id="KW-0240">DNA-directed RNA polymerase</keyword>
<keyword id="KW-0479">Metal-binding</keyword>
<keyword id="KW-0548">Nucleotidyltransferase</keyword>
<keyword id="KW-0804">Transcription</keyword>
<keyword id="KW-0808">Transferase</keyword>
<keyword id="KW-0862">Zinc</keyword>
<reference key="1">
    <citation type="journal article" date="2008" name="Genomics">
        <title>Evolution in the laboratory: the genome of Halobacterium salinarum strain R1 compared to that of strain NRC-1.</title>
        <authorList>
            <person name="Pfeiffer F."/>
            <person name="Schuster S.C."/>
            <person name="Broicher A."/>
            <person name="Falb M."/>
            <person name="Palm P."/>
            <person name="Rodewald K."/>
            <person name="Ruepp A."/>
            <person name="Soppa J."/>
            <person name="Tittor J."/>
            <person name="Oesterhelt D."/>
        </authorList>
    </citation>
    <scope>NUCLEOTIDE SEQUENCE [LARGE SCALE GENOMIC DNA]</scope>
    <source>
        <strain>ATCC 29341 / DSM 671 / R1</strain>
    </source>
</reference>
<gene>
    <name evidence="1" type="primary">rpo10</name>
    <name evidence="1" type="synonym">rpoN</name>
    <name type="ordered locus">OE_2637F</name>
</gene>